<protein>
    <recommendedName>
        <fullName evidence="1">Eukaryotic translation initiation factor 3 subunit E-A</fullName>
        <shortName evidence="1">eIF3e-A</shortName>
    </recommendedName>
    <alternativeName>
        <fullName evidence="1">Eukaryotic translation initiation factor 3 subunit 6-A</fullName>
    </alternativeName>
</protein>
<keyword id="KW-0963">Cytoplasm</keyword>
<keyword id="KW-0396">Initiation factor</keyword>
<keyword id="KW-0539">Nucleus</keyword>
<keyword id="KW-0648">Protein biosynthesis</keyword>
<keyword id="KW-1185">Reference proteome</keyword>
<dbReference type="EMBL" id="AY648778">
    <property type="protein sequence ID" value="AAT68096.1"/>
    <property type="molecule type" value="mRNA"/>
</dbReference>
<dbReference type="EMBL" id="AY398340">
    <property type="protein sequence ID" value="AAQ97773.1"/>
    <property type="status" value="ALT_FRAME"/>
    <property type="molecule type" value="mRNA"/>
</dbReference>
<dbReference type="EMBL" id="BC061454">
    <property type="protein sequence ID" value="AAH61454.1"/>
    <property type="molecule type" value="mRNA"/>
</dbReference>
<dbReference type="RefSeq" id="NP_957133.1">
    <property type="nucleotide sequence ID" value="NM_200839.1"/>
</dbReference>
<dbReference type="SMR" id="Q6DRI1"/>
<dbReference type="FunCoup" id="Q6DRI1">
    <property type="interactions" value="2848"/>
</dbReference>
<dbReference type="STRING" id="7955.ENSDARP00000106853"/>
<dbReference type="PaxDb" id="7955-ENSDARP00000106853"/>
<dbReference type="Ensembl" id="ENSDART00000064209">
    <property type="protein sequence ID" value="ENSDARP00000064208"/>
    <property type="gene ID" value="ENSDARG00000113466"/>
</dbReference>
<dbReference type="Ensembl" id="ENSDART00000126705">
    <property type="protein sequence ID" value="ENSDARP00000106853"/>
    <property type="gene ID" value="ENSDARG00000090697"/>
</dbReference>
<dbReference type="GeneID" id="325102"/>
<dbReference type="KEGG" id="dre:325102"/>
<dbReference type="AGR" id="ZFIN:ZDB-GENE-030131-3827"/>
<dbReference type="CTD" id="325102"/>
<dbReference type="ZFIN" id="ZDB-GENE-030131-3827">
    <property type="gene designation" value="eif3ea"/>
</dbReference>
<dbReference type="eggNOG" id="KOG2758">
    <property type="taxonomic scope" value="Eukaryota"/>
</dbReference>
<dbReference type="HOGENOM" id="CLU_031132_0_1_1"/>
<dbReference type="InParanoid" id="Q6DRI1"/>
<dbReference type="OMA" id="HERFQIG"/>
<dbReference type="OrthoDB" id="417252at2759"/>
<dbReference type="PhylomeDB" id="Q6DRI1"/>
<dbReference type="TreeFam" id="TF101518"/>
<dbReference type="Reactome" id="R-DRE-156827">
    <property type="pathway name" value="L13a-mediated translational silencing of Ceruloplasmin expression"/>
</dbReference>
<dbReference type="Reactome" id="R-DRE-72689">
    <property type="pathway name" value="Formation of a pool of free 40S subunits"/>
</dbReference>
<dbReference type="Reactome" id="R-DRE-72695">
    <property type="pathway name" value="Formation of the ternary complex, and subsequently, the 43S complex"/>
</dbReference>
<dbReference type="Reactome" id="R-DRE-72702">
    <property type="pathway name" value="Ribosomal scanning and start codon recognition"/>
</dbReference>
<dbReference type="PRO" id="PR:Q6DRI1"/>
<dbReference type="Proteomes" id="UP000000437">
    <property type="component" value="Alternate scaffold 16"/>
</dbReference>
<dbReference type="Proteomes" id="UP000000437">
    <property type="component" value="Chromosome 16"/>
</dbReference>
<dbReference type="Bgee" id="ENSDARG00000090697">
    <property type="expression patterns" value="Expressed in pharyngeal gill and 23 other cell types or tissues"/>
</dbReference>
<dbReference type="ExpressionAtlas" id="Q6DRI1">
    <property type="expression patterns" value="baseline"/>
</dbReference>
<dbReference type="GO" id="GO:0016282">
    <property type="term" value="C:eukaryotic 43S preinitiation complex"/>
    <property type="evidence" value="ECO:0007669"/>
    <property type="project" value="UniProtKB-UniRule"/>
</dbReference>
<dbReference type="GO" id="GO:0033290">
    <property type="term" value="C:eukaryotic 48S preinitiation complex"/>
    <property type="evidence" value="ECO:0007669"/>
    <property type="project" value="UniProtKB-UniRule"/>
</dbReference>
<dbReference type="GO" id="GO:0005852">
    <property type="term" value="C:eukaryotic translation initiation factor 3 complex"/>
    <property type="evidence" value="ECO:0000250"/>
    <property type="project" value="UniProtKB"/>
</dbReference>
<dbReference type="GO" id="GO:0071540">
    <property type="term" value="C:eukaryotic translation initiation factor 3 complex, eIF3e"/>
    <property type="evidence" value="ECO:0007669"/>
    <property type="project" value="UniProtKB-UniRule"/>
</dbReference>
<dbReference type="GO" id="GO:0005634">
    <property type="term" value="C:nucleus"/>
    <property type="evidence" value="ECO:0000318"/>
    <property type="project" value="GO_Central"/>
</dbReference>
<dbReference type="GO" id="GO:0003743">
    <property type="term" value="F:translation initiation factor activity"/>
    <property type="evidence" value="ECO:0007669"/>
    <property type="project" value="UniProtKB-UniRule"/>
</dbReference>
<dbReference type="GO" id="GO:0001732">
    <property type="term" value="P:formation of cytoplasmic translation initiation complex"/>
    <property type="evidence" value="ECO:0007669"/>
    <property type="project" value="UniProtKB-UniRule"/>
</dbReference>
<dbReference type="GO" id="GO:0006413">
    <property type="term" value="P:translational initiation"/>
    <property type="evidence" value="ECO:0000250"/>
    <property type="project" value="UniProtKB"/>
</dbReference>
<dbReference type="CDD" id="cd21378">
    <property type="entry name" value="eIF3E"/>
    <property type="match status" value="1"/>
</dbReference>
<dbReference type="HAMAP" id="MF_03004">
    <property type="entry name" value="eIF3e"/>
    <property type="match status" value="1"/>
</dbReference>
<dbReference type="InterPro" id="IPR016650">
    <property type="entry name" value="eIF3e"/>
</dbReference>
<dbReference type="InterPro" id="IPR019010">
    <property type="entry name" value="eIF3e_N"/>
</dbReference>
<dbReference type="InterPro" id="IPR000717">
    <property type="entry name" value="PCI_dom"/>
</dbReference>
<dbReference type="InterPro" id="IPR036390">
    <property type="entry name" value="WH_DNA-bd_sf"/>
</dbReference>
<dbReference type="PANTHER" id="PTHR10317">
    <property type="entry name" value="EUKARYOTIC TRANSLATION INITIATION FACTOR 3 SUBUNIT E"/>
    <property type="match status" value="1"/>
</dbReference>
<dbReference type="Pfam" id="PF09440">
    <property type="entry name" value="eIF3_N"/>
    <property type="match status" value="1"/>
</dbReference>
<dbReference type="Pfam" id="PF21357">
    <property type="entry name" value="EIF3E_C"/>
    <property type="match status" value="1"/>
</dbReference>
<dbReference type="Pfam" id="PF01399">
    <property type="entry name" value="PCI"/>
    <property type="match status" value="1"/>
</dbReference>
<dbReference type="PIRSF" id="PIRSF016255">
    <property type="entry name" value="eIF3e_su6"/>
    <property type="match status" value="1"/>
</dbReference>
<dbReference type="SMART" id="SM01186">
    <property type="entry name" value="eIF3_N"/>
    <property type="match status" value="1"/>
</dbReference>
<dbReference type="SMART" id="SM00088">
    <property type="entry name" value="PINT"/>
    <property type="match status" value="1"/>
</dbReference>
<dbReference type="SUPFAM" id="SSF46785">
    <property type="entry name" value="Winged helix' DNA-binding domain"/>
    <property type="match status" value="1"/>
</dbReference>
<dbReference type="PROSITE" id="PS50250">
    <property type="entry name" value="PCI"/>
    <property type="match status" value="1"/>
</dbReference>
<name>EI3EA_DANRE</name>
<organism>
    <name type="scientific">Danio rerio</name>
    <name type="common">Zebrafish</name>
    <name type="synonym">Brachydanio rerio</name>
    <dbReference type="NCBI Taxonomy" id="7955"/>
    <lineage>
        <taxon>Eukaryota</taxon>
        <taxon>Metazoa</taxon>
        <taxon>Chordata</taxon>
        <taxon>Craniata</taxon>
        <taxon>Vertebrata</taxon>
        <taxon>Euteleostomi</taxon>
        <taxon>Actinopterygii</taxon>
        <taxon>Neopterygii</taxon>
        <taxon>Teleostei</taxon>
        <taxon>Ostariophysi</taxon>
        <taxon>Cypriniformes</taxon>
        <taxon>Danionidae</taxon>
        <taxon>Danioninae</taxon>
        <taxon>Danio</taxon>
    </lineage>
</organism>
<evidence type="ECO:0000255" key="1">
    <source>
        <dbReference type="HAMAP-Rule" id="MF_03004"/>
    </source>
</evidence>
<evidence type="ECO:0000255" key="2">
    <source>
        <dbReference type="PROSITE-ProRule" id="PRU01185"/>
    </source>
</evidence>
<evidence type="ECO:0000256" key="3">
    <source>
        <dbReference type="SAM" id="MobiDB-lite"/>
    </source>
</evidence>
<evidence type="ECO:0000269" key="4">
    <source>
    </source>
</evidence>
<evidence type="ECO:0000305" key="5"/>
<gene>
    <name type="primary">eif3ea</name>
    <name type="synonym">eif3s6a</name>
    <name type="synonym">int6</name>
</gene>
<feature type="chain" id="PRO_0000365954" description="Eukaryotic translation initiation factor 3 subunit E-A">
    <location>
        <begin position="1"/>
        <end position="446"/>
    </location>
</feature>
<feature type="domain" description="PCI" evidence="2">
    <location>
        <begin position="222"/>
        <end position="399"/>
    </location>
</feature>
<feature type="region of interest" description="Disordered" evidence="3">
    <location>
        <begin position="426"/>
        <end position="446"/>
    </location>
</feature>
<feature type="compositionally biased region" description="Polar residues" evidence="3">
    <location>
        <begin position="428"/>
        <end position="438"/>
    </location>
</feature>
<feature type="sequence conflict" description="In Ref. 1; AAT68096." evidence="5" ref="1">
    <original>Q</original>
    <variation>H</variation>
    <location>
        <position position="284"/>
    </location>
</feature>
<accession>Q6DRI1</accession>
<accession>Q6P7X8</accession>
<accession>Q6TH16</accession>
<comment type="function">
    <text evidence="1">Component of the eukaryotic translation initiation factor 3 (eIF-3) complex, which is involved in protein synthesis of a specialized repertoire of mRNAs and, together with other initiation factors, stimulates binding of mRNA and methionyl-tRNAi to the 40S ribosome. The eIF-3 complex specifically targets and initiates translation of a subset of mRNAs involved in cell proliferation.</text>
</comment>
<comment type="subunit">
    <text evidence="1">Component of the eukaryotic translation initiation factor 3 (eIF-3) complex, which is composed of 13 subunits: eif3a, eif3b, eif3c, eif3d, eif3e, eif3f, eif3g, eif3h, eif3i, eif3j, eif3k, eif3l and eif3m.</text>
</comment>
<comment type="subcellular location">
    <subcellularLocation>
        <location evidence="1">Cytoplasm</location>
    </subcellularLocation>
    <subcellularLocation>
        <location evidence="1">Nucleus</location>
    </subcellularLocation>
</comment>
<comment type="developmental stage">
    <text evidence="4">Expressed in developing craniofacial tissues, intestine and lens.</text>
</comment>
<comment type="disruption phenotype">
    <text evidence="4">Reduced melanisation 2 in embryos 2 days post-fertilization (dpf), misplaced pigment cells in the tail at 3 dpf, and abnormal jaw morphogenesis at 4 dpf and 5 dpf.</text>
</comment>
<comment type="similarity">
    <text evidence="1">Belongs to the eIF-3 subunit E family.</text>
</comment>
<comment type="sequence caution" evidence="5">
    <conflict type="frameshift">
        <sequence resource="EMBL-CDS" id="AAQ97773"/>
    </conflict>
</comment>
<sequence>MAEYDLTTKIAHFLDRHLVFPLLEFLSVKEIYNEHELLHGKLDLLSDTNMVDFAMDVYRNLFPDKEIPNSLREKRTTVVAQLKQLQSETEPIVKVFEDPETTRQMQSTRDGRMLFDYLADKHGFRQEYLDTLYRYAKFQYECGNYSGAAEYLYFFRVLVPATDRNALNSLWGKLASEILMQNWEAAMEDLTRLRETIDNNTVSSPLQSLQQRTWLIHWSLFVFFNHPKGRDNIIELFLYQPQYLNAIQTMCPHILRYLTTAVITNKDVRKRRQVLKDLVKVIQQESYTYKDPITEFVECLYVNFDFDSAQKKLRECEAVLVNDFFLVACLEDFIENARLFIFETFCRIHQCISIGMLADKLNMTPEEAERWIVNLIRNARLDAKIDSKLGHVVMGNNAISPYQQVIEKTKSLSFRSQMLAMNIEKKQSNANRNETPNWAAQDAGFY</sequence>
<proteinExistence type="evidence at transcript level"/>
<reference key="1">
    <citation type="journal article" date="2004" name="Proc. Natl. Acad. Sci. U.S.A.">
        <title>Identification of 315 genes essential for early zebrafish development.</title>
        <authorList>
            <person name="Amsterdam A."/>
            <person name="Nissen R.M."/>
            <person name="Sun Z."/>
            <person name="Swindell E.C."/>
            <person name="Farrington S."/>
            <person name="Hopkins N."/>
        </authorList>
    </citation>
    <scope>NUCLEOTIDE SEQUENCE [LARGE SCALE MRNA]</scope>
    <source>
        <tissue>Embryo</tissue>
    </source>
</reference>
<reference key="2">
    <citation type="journal article" date="2004" name="Proc. Natl. Acad. Sci. U.S.A.">
        <title>Hematopoietic gene expression profile in zebrafish kidney marrow.</title>
        <authorList>
            <person name="Song H.-D."/>
            <person name="Sun X.-J."/>
            <person name="Deng M."/>
            <person name="Zhang G.-W."/>
            <person name="Zhou Y."/>
            <person name="Wu X.-Y."/>
            <person name="Sheng Y."/>
            <person name="Chen Y."/>
            <person name="Ruan Z."/>
            <person name="Jiang C.-L."/>
            <person name="Fan H.-Y."/>
            <person name="Zon L.I."/>
            <person name="Kanki J.P."/>
            <person name="Liu T.X."/>
            <person name="Look A.T."/>
            <person name="Chen Z."/>
        </authorList>
    </citation>
    <scope>NUCLEOTIDE SEQUENCE [LARGE SCALE MRNA]</scope>
    <source>
        <tissue>Kidney marrow</tissue>
    </source>
</reference>
<reference key="3">
    <citation type="submission" date="2003-11" db="EMBL/GenBank/DDBJ databases">
        <authorList>
            <consortium name="NIH - Zebrafish Gene Collection (ZGC) project"/>
        </authorList>
    </citation>
    <scope>NUCLEOTIDE SEQUENCE [LARGE SCALE MRNA]</scope>
    <source>
        <strain>AB</strain>
    </source>
</reference>
<reference key="4">
    <citation type="journal article" date="2007" name="PLoS ONE">
        <title>The INT6 cancer gene and MEK signaling pathways converge during zebrafish development.</title>
        <authorList>
            <person name="Grzmil M."/>
            <person name="Whiting D."/>
            <person name="Maule J."/>
            <person name="Anastasaki C."/>
            <person name="Amatruda J.F."/>
            <person name="Kelsh R.N."/>
            <person name="Norbury C.J."/>
            <person name="Patton E.E."/>
        </authorList>
    </citation>
    <scope>DEVELOPMENTAL STAGE</scope>
    <scope>DISRUPTION PHENOTYPE</scope>
</reference>